<comment type="function">
    <text evidence="1">Odorant receptor which mediates acceptance or avoidance behavior, depending on its substrates. The odorant receptor repertoire encodes a large collection of odor stimuli that vary widely in identity, intensity, and duration. May form a complex with Orco to form odorant-sensing units, providing sensitive and prolonged odorant signaling and calcium permeability (By similarity).</text>
</comment>
<comment type="subunit">
    <text evidence="1">Interacts with Orco. Complexes exist early in the endomembrane system in olfactory sensory neurons (OSNs), coupling these complexes to the conserved ciliary trafficking pathway (By similarity).</text>
</comment>
<comment type="subcellular location">
    <subcellularLocation>
        <location evidence="1">Cell membrane</location>
        <topology evidence="1">Multi-pass membrane protein</topology>
    </subcellularLocation>
</comment>
<comment type="miscellaneous">
    <text>The atypical heteromeric and topological design of the odorant receptors appears to be an insect-specific solution for odor recognition, making the OR/Orco complex an attractive target for the development of highly selective insect repellents to disrupt olfactory-mediated host-seeking behaviors of insect disease vectors. Odor-evoked OR currents are independent of known G-protein-coupled second messenger pathways.</text>
</comment>
<comment type="similarity">
    <text evidence="3">Belongs to the insect chemoreceptor superfamily. Heteromeric odorant receptor channel (TC 1.A.69) family. Or49a subfamily.</text>
</comment>
<accession>Q9VDM1</accession>
<feature type="chain" id="PRO_0000174281" description="Putative odorant receptor 92a">
    <location>
        <begin position="1"/>
        <end position="408"/>
    </location>
</feature>
<feature type="topological domain" description="Cytoplasmic" evidence="2">
    <location>
        <begin position="1"/>
        <end position="52"/>
    </location>
</feature>
<feature type="transmembrane region" description="Helical; Name=1" evidence="2">
    <location>
        <begin position="53"/>
        <end position="73"/>
    </location>
</feature>
<feature type="topological domain" description="Extracellular" evidence="2">
    <location>
        <position position="74"/>
    </location>
</feature>
<feature type="transmembrane region" description="Helical; Name=2" evidence="2">
    <location>
        <begin position="75"/>
        <end position="95"/>
    </location>
</feature>
<feature type="topological domain" description="Cytoplasmic" evidence="2">
    <location>
        <begin position="96"/>
        <end position="144"/>
    </location>
</feature>
<feature type="transmembrane region" description="Helical; Name=3" evidence="2">
    <location>
        <begin position="145"/>
        <end position="165"/>
    </location>
</feature>
<feature type="topological domain" description="Extracellular" evidence="2">
    <location>
        <begin position="166"/>
        <end position="209"/>
    </location>
</feature>
<feature type="transmembrane region" description="Helical; Name=4" evidence="2">
    <location>
        <begin position="210"/>
        <end position="230"/>
    </location>
</feature>
<feature type="topological domain" description="Cytoplasmic" evidence="2">
    <location>
        <begin position="231"/>
        <end position="276"/>
    </location>
</feature>
<feature type="transmembrane region" description="Helical; Name=5" evidence="2">
    <location>
        <begin position="277"/>
        <end position="301"/>
    </location>
</feature>
<feature type="topological domain" description="Extracellular" evidence="2">
    <location>
        <begin position="302"/>
        <end position="310"/>
    </location>
</feature>
<feature type="transmembrane region" description="Helical; Name=6" evidence="2">
    <location>
        <begin position="311"/>
        <end position="331"/>
    </location>
</feature>
<feature type="topological domain" description="Cytoplasmic" evidence="2">
    <location>
        <begin position="332"/>
        <end position="378"/>
    </location>
</feature>
<feature type="transmembrane region" description="Helical; Name=7" evidence="2">
    <location>
        <begin position="379"/>
        <end position="399"/>
    </location>
</feature>
<feature type="topological domain" description="Extracellular" evidence="2">
    <location>
        <begin position="400"/>
        <end position="408"/>
    </location>
</feature>
<name>OR92A_DROME</name>
<sequence length="408" mass="47552">MLFRKRKPKSDDEVITFDELTRFPMTFYKTIGEDLYSDRDPNVIRRYLLRFYLVLGFLNFNAYVVGEIAYFIVHIMSTTTLLEATAVAPCIGFSFMADFKQFGLTVNRKRLVRLLDDLKEIFPLDLEAQRKYNVSFYRKHMNRVMTLFTILCMTYTSSFSFYPAIKSTIKYYLMGSEIFERNYGFHILFPYDAETDLTVYWFSYWGLAHCAYVAGVSYVCVDLLLIATITQLTMHFNFIANDLEAYEGGDHTDEENIKYLHNLVVYHARALDLSEEVNNIFSFLILWNFIAASLVICFAGFQITASNVEDIVLYFIFFSASLVQVFVVCYYGDEMISSSSRIGHSAFNQNWLPCSTKYKRILQFIIARSQKPASIRPPTFPPISFNTFMKVISMSYQFFALLRTTYYG</sequence>
<evidence type="ECO:0000250" key="1"/>
<evidence type="ECO:0000255" key="2"/>
<evidence type="ECO:0000305" key="3"/>
<protein>
    <recommendedName>
        <fullName>Putative odorant receptor 92a</fullName>
    </recommendedName>
</protein>
<organism>
    <name type="scientific">Drosophila melanogaster</name>
    <name type="common">Fruit fly</name>
    <dbReference type="NCBI Taxonomy" id="7227"/>
    <lineage>
        <taxon>Eukaryota</taxon>
        <taxon>Metazoa</taxon>
        <taxon>Ecdysozoa</taxon>
        <taxon>Arthropoda</taxon>
        <taxon>Hexapoda</taxon>
        <taxon>Insecta</taxon>
        <taxon>Pterygota</taxon>
        <taxon>Neoptera</taxon>
        <taxon>Endopterygota</taxon>
        <taxon>Diptera</taxon>
        <taxon>Brachycera</taxon>
        <taxon>Muscomorpha</taxon>
        <taxon>Ephydroidea</taxon>
        <taxon>Drosophilidae</taxon>
        <taxon>Drosophila</taxon>
        <taxon>Sophophora</taxon>
    </lineage>
</organism>
<reference key="1">
    <citation type="journal article" date="2000" name="Science">
        <title>The genome sequence of Drosophila melanogaster.</title>
        <authorList>
            <person name="Adams M.D."/>
            <person name="Celniker S.E."/>
            <person name="Holt R.A."/>
            <person name="Evans C.A."/>
            <person name="Gocayne J.D."/>
            <person name="Amanatides P.G."/>
            <person name="Scherer S.E."/>
            <person name="Li P.W."/>
            <person name="Hoskins R.A."/>
            <person name="Galle R.F."/>
            <person name="George R.A."/>
            <person name="Lewis S.E."/>
            <person name="Richards S."/>
            <person name="Ashburner M."/>
            <person name="Henderson S.N."/>
            <person name="Sutton G.G."/>
            <person name="Wortman J.R."/>
            <person name="Yandell M.D."/>
            <person name="Zhang Q."/>
            <person name="Chen L.X."/>
            <person name="Brandon R.C."/>
            <person name="Rogers Y.-H.C."/>
            <person name="Blazej R.G."/>
            <person name="Champe M."/>
            <person name="Pfeiffer B.D."/>
            <person name="Wan K.H."/>
            <person name="Doyle C."/>
            <person name="Baxter E.G."/>
            <person name="Helt G."/>
            <person name="Nelson C.R."/>
            <person name="Miklos G.L.G."/>
            <person name="Abril J.F."/>
            <person name="Agbayani A."/>
            <person name="An H.-J."/>
            <person name="Andrews-Pfannkoch C."/>
            <person name="Baldwin D."/>
            <person name="Ballew R.M."/>
            <person name="Basu A."/>
            <person name="Baxendale J."/>
            <person name="Bayraktaroglu L."/>
            <person name="Beasley E.M."/>
            <person name="Beeson K.Y."/>
            <person name="Benos P.V."/>
            <person name="Berman B.P."/>
            <person name="Bhandari D."/>
            <person name="Bolshakov S."/>
            <person name="Borkova D."/>
            <person name="Botchan M.R."/>
            <person name="Bouck J."/>
            <person name="Brokstein P."/>
            <person name="Brottier P."/>
            <person name="Burtis K.C."/>
            <person name="Busam D.A."/>
            <person name="Butler H."/>
            <person name="Cadieu E."/>
            <person name="Center A."/>
            <person name="Chandra I."/>
            <person name="Cherry J.M."/>
            <person name="Cawley S."/>
            <person name="Dahlke C."/>
            <person name="Davenport L.B."/>
            <person name="Davies P."/>
            <person name="de Pablos B."/>
            <person name="Delcher A."/>
            <person name="Deng Z."/>
            <person name="Mays A.D."/>
            <person name="Dew I."/>
            <person name="Dietz S.M."/>
            <person name="Dodson K."/>
            <person name="Doup L.E."/>
            <person name="Downes M."/>
            <person name="Dugan-Rocha S."/>
            <person name="Dunkov B.C."/>
            <person name="Dunn P."/>
            <person name="Durbin K.J."/>
            <person name="Evangelista C.C."/>
            <person name="Ferraz C."/>
            <person name="Ferriera S."/>
            <person name="Fleischmann W."/>
            <person name="Fosler C."/>
            <person name="Gabrielian A.E."/>
            <person name="Garg N.S."/>
            <person name="Gelbart W.M."/>
            <person name="Glasser K."/>
            <person name="Glodek A."/>
            <person name="Gong F."/>
            <person name="Gorrell J.H."/>
            <person name="Gu Z."/>
            <person name="Guan P."/>
            <person name="Harris M."/>
            <person name="Harris N.L."/>
            <person name="Harvey D.A."/>
            <person name="Heiman T.J."/>
            <person name="Hernandez J.R."/>
            <person name="Houck J."/>
            <person name="Hostin D."/>
            <person name="Houston K.A."/>
            <person name="Howland T.J."/>
            <person name="Wei M.-H."/>
            <person name="Ibegwam C."/>
            <person name="Jalali M."/>
            <person name="Kalush F."/>
            <person name="Karpen G.H."/>
            <person name="Ke Z."/>
            <person name="Kennison J.A."/>
            <person name="Ketchum K.A."/>
            <person name="Kimmel B.E."/>
            <person name="Kodira C.D."/>
            <person name="Kraft C.L."/>
            <person name="Kravitz S."/>
            <person name="Kulp D."/>
            <person name="Lai Z."/>
            <person name="Lasko P."/>
            <person name="Lei Y."/>
            <person name="Levitsky A.A."/>
            <person name="Li J.H."/>
            <person name="Li Z."/>
            <person name="Liang Y."/>
            <person name="Lin X."/>
            <person name="Liu X."/>
            <person name="Mattei B."/>
            <person name="McIntosh T.C."/>
            <person name="McLeod M.P."/>
            <person name="McPherson D."/>
            <person name="Merkulov G."/>
            <person name="Milshina N.V."/>
            <person name="Mobarry C."/>
            <person name="Morris J."/>
            <person name="Moshrefi A."/>
            <person name="Mount S.M."/>
            <person name="Moy M."/>
            <person name="Murphy B."/>
            <person name="Murphy L."/>
            <person name="Muzny D.M."/>
            <person name="Nelson D.L."/>
            <person name="Nelson D.R."/>
            <person name="Nelson K.A."/>
            <person name="Nixon K."/>
            <person name="Nusskern D.R."/>
            <person name="Pacleb J.M."/>
            <person name="Palazzolo M."/>
            <person name="Pittman G.S."/>
            <person name="Pan S."/>
            <person name="Pollard J."/>
            <person name="Puri V."/>
            <person name="Reese M.G."/>
            <person name="Reinert K."/>
            <person name="Remington K."/>
            <person name="Saunders R.D.C."/>
            <person name="Scheeler F."/>
            <person name="Shen H."/>
            <person name="Shue B.C."/>
            <person name="Siden-Kiamos I."/>
            <person name="Simpson M."/>
            <person name="Skupski M.P."/>
            <person name="Smith T.J."/>
            <person name="Spier E."/>
            <person name="Spradling A.C."/>
            <person name="Stapleton M."/>
            <person name="Strong R."/>
            <person name="Sun E."/>
            <person name="Svirskas R."/>
            <person name="Tector C."/>
            <person name="Turner R."/>
            <person name="Venter E."/>
            <person name="Wang A.H."/>
            <person name="Wang X."/>
            <person name="Wang Z.-Y."/>
            <person name="Wassarman D.A."/>
            <person name="Weinstock G.M."/>
            <person name="Weissenbach J."/>
            <person name="Williams S.M."/>
            <person name="Woodage T."/>
            <person name="Worley K.C."/>
            <person name="Wu D."/>
            <person name="Yang S."/>
            <person name="Yao Q.A."/>
            <person name="Ye J."/>
            <person name="Yeh R.-F."/>
            <person name="Zaveri J.S."/>
            <person name="Zhan M."/>
            <person name="Zhang G."/>
            <person name="Zhao Q."/>
            <person name="Zheng L."/>
            <person name="Zheng X.H."/>
            <person name="Zhong F.N."/>
            <person name="Zhong W."/>
            <person name="Zhou X."/>
            <person name="Zhu S.C."/>
            <person name="Zhu X."/>
            <person name="Smith H.O."/>
            <person name="Gibbs R.A."/>
            <person name="Myers E.W."/>
            <person name="Rubin G.M."/>
            <person name="Venter J.C."/>
        </authorList>
    </citation>
    <scope>NUCLEOTIDE SEQUENCE [LARGE SCALE GENOMIC DNA]</scope>
    <source>
        <strain>Berkeley</strain>
    </source>
</reference>
<reference key="2">
    <citation type="journal article" date="2002" name="Genome Biol.">
        <title>Annotation of the Drosophila melanogaster euchromatic genome: a systematic review.</title>
        <authorList>
            <person name="Misra S."/>
            <person name="Crosby M.A."/>
            <person name="Mungall C.J."/>
            <person name="Matthews B.B."/>
            <person name="Campbell K.S."/>
            <person name="Hradecky P."/>
            <person name="Huang Y."/>
            <person name="Kaminker J.S."/>
            <person name="Millburn G.H."/>
            <person name="Prochnik S.E."/>
            <person name="Smith C.D."/>
            <person name="Tupy J.L."/>
            <person name="Whitfield E.J."/>
            <person name="Bayraktaroglu L."/>
            <person name="Berman B.P."/>
            <person name="Bettencourt B.R."/>
            <person name="Celniker S.E."/>
            <person name="de Grey A.D.N.J."/>
            <person name="Drysdale R.A."/>
            <person name="Harris N.L."/>
            <person name="Richter J."/>
            <person name="Russo S."/>
            <person name="Schroeder A.J."/>
            <person name="Shu S.Q."/>
            <person name="Stapleton M."/>
            <person name="Yamada C."/>
            <person name="Ashburner M."/>
            <person name="Gelbart W.M."/>
            <person name="Rubin G.M."/>
            <person name="Lewis S.E."/>
        </authorList>
    </citation>
    <scope>GENOME REANNOTATION</scope>
    <source>
        <strain>Berkeley</strain>
    </source>
</reference>
<gene>
    <name type="primary">Or92a</name>
    <name type="ORF">CG17916</name>
</gene>
<keyword id="KW-1003">Cell membrane</keyword>
<keyword id="KW-0472">Membrane</keyword>
<keyword id="KW-0552">Olfaction</keyword>
<keyword id="KW-0675">Receptor</keyword>
<keyword id="KW-1185">Reference proteome</keyword>
<keyword id="KW-0716">Sensory transduction</keyword>
<keyword id="KW-0807">Transducer</keyword>
<keyword id="KW-0812">Transmembrane</keyword>
<keyword id="KW-1133">Transmembrane helix</keyword>
<dbReference type="EMBL" id="AE014297">
    <property type="protein sequence ID" value="AAF55769.2"/>
    <property type="molecule type" value="Genomic_DNA"/>
</dbReference>
<dbReference type="RefSeq" id="NP_524414.2">
    <property type="nucleotide sequence ID" value="NM_079690.2"/>
</dbReference>
<dbReference type="SMR" id="Q9VDM1"/>
<dbReference type="BioGRID" id="67405">
    <property type="interactions" value="1"/>
</dbReference>
<dbReference type="FunCoup" id="Q9VDM1">
    <property type="interactions" value="32"/>
</dbReference>
<dbReference type="STRING" id="7227.FBpp0083295"/>
<dbReference type="PaxDb" id="7227-FBpp0083295"/>
<dbReference type="EnsemblMetazoa" id="FBtr0083887">
    <property type="protein sequence ID" value="FBpp0083295"/>
    <property type="gene ID" value="FBgn0038798"/>
</dbReference>
<dbReference type="GeneID" id="42425"/>
<dbReference type="KEGG" id="dme:Dmel_CG17916"/>
<dbReference type="AGR" id="FB:FBgn0038798"/>
<dbReference type="CTD" id="42425"/>
<dbReference type="FlyBase" id="FBgn0038798">
    <property type="gene designation" value="Or92a"/>
</dbReference>
<dbReference type="VEuPathDB" id="VectorBase:FBgn0038798"/>
<dbReference type="eggNOG" id="ENOG502SR0T">
    <property type="taxonomic scope" value="Eukaryota"/>
</dbReference>
<dbReference type="GeneTree" id="ENSGT00560000077544"/>
<dbReference type="HOGENOM" id="CLU_033399_0_0_1"/>
<dbReference type="InParanoid" id="Q9VDM1"/>
<dbReference type="OMA" id="YFMGSEI"/>
<dbReference type="OrthoDB" id="8185860at2759"/>
<dbReference type="PhylomeDB" id="Q9VDM1"/>
<dbReference type="BioGRID-ORCS" id="42425">
    <property type="hits" value="0 hits in 1 CRISPR screen"/>
</dbReference>
<dbReference type="GenomeRNAi" id="42425"/>
<dbReference type="PRO" id="PR:Q9VDM1"/>
<dbReference type="Proteomes" id="UP000000803">
    <property type="component" value="Chromosome 3R"/>
</dbReference>
<dbReference type="Bgee" id="FBgn0038798">
    <property type="expression patterns" value="Expressed in adult olfactory receptor neuron Or92a (Drosophila) in antenna and 6 other cell types or tissues"/>
</dbReference>
<dbReference type="ExpressionAtlas" id="Q9VDM1">
    <property type="expression patterns" value="baseline and differential"/>
</dbReference>
<dbReference type="GO" id="GO:0034703">
    <property type="term" value="C:cation channel complex"/>
    <property type="evidence" value="ECO:0000250"/>
    <property type="project" value="FlyBase"/>
</dbReference>
<dbReference type="GO" id="GO:0032590">
    <property type="term" value="C:dendrite membrane"/>
    <property type="evidence" value="ECO:0000250"/>
    <property type="project" value="FlyBase"/>
</dbReference>
<dbReference type="GO" id="GO:0005886">
    <property type="term" value="C:plasma membrane"/>
    <property type="evidence" value="ECO:0000250"/>
    <property type="project" value="FlyBase"/>
</dbReference>
<dbReference type="GO" id="GO:0170020">
    <property type="term" value="F:ionotropic olfactory receptor activity"/>
    <property type="evidence" value="ECO:0000250"/>
    <property type="project" value="FlyBase"/>
</dbReference>
<dbReference type="GO" id="GO:0005549">
    <property type="term" value="F:odorant binding"/>
    <property type="evidence" value="ECO:0000250"/>
    <property type="project" value="FlyBase"/>
</dbReference>
<dbReference type="GO" id="GO:0004984">
    <property type="term" value="F:olfactory receptor activity"/>
    <property type="evidence" value="ECO:0000318"/>
    <property type="project" value="GO_Central"/>
</dbReference>
<dbReference type="GO" id="GO:0050911">
    <property type="term" value="P:detection of chemical stimulus involved in sensory perception of smell"/>
    <property type="evidence" value="ECO:0000250"/>
    <property type="project" value="FlyBase"/>
</dbReference>
<dbReference type="GO" id="GO:0007165">
    <property type="term" value="P:signal transduction"/>
    <property type="evidence" value="ECO:0007669"/>
    <property type="project" value="UniProtKB-KW"/>
</dbReference>
<dbReference type="InterPro" id="IPR004117">
    <property type="entry name" value="7tm6_olfct_rcpt"/>
</dbReference>
<dbReference type="PANTHER" id="PTHR21137">
    <property type="entry name" value="ODORANT RECEPTOR"/>
    <property type="match status" value="1"/>
</dbReference>
<dbReference type="PANTHER" id="PTHR21137:SF44">
    <property type="entry name" value="ODORANT RECEPTOR 13A-RELATED"/>
    <property type="match status" value="1"/>
</dbReference>
<dbReference type="Pfam" id="PF02949">
    <property type="entry name" value="7tm_6"/>
    <property type="match status" value="1"/>
</dbReference>
<proteinExistence type="inferred from homology"/>